<name>PYRG_SYNAS</name>
<sequence>MRTKYIFITGGVLSSLGKGLAAASIAAVLECRGLRVTNQKLDPYINVDPGTMSPFQHGEVFVTDDGAETDLDLGHYERFTSTRMGKSNNLTTGQVYFSVITKERRGDYLGKTVQVIPHITNEIKDYIRQSSEGFDVALIEIGGTVGDIESLPFLEAIRQFRNEVGKQNAIFIHLTWVPFIKTAGEVKTKPTQHSVKALREIGIQPDILLCRTEEFLSEDIKAKIALFCNVEEAAVFTAKDVSCIYEVPLIYHREGLDQKIVDLLNIWTGQPHLEAWENVVQKITSPSYEVNIAIVGKYVNLTDSYKSLNEALVHGGIGNDCQVNLRFVDSEKIEKDGLNHQLENVDGILVPGGFGNRGIEGMIQVIRYARENKVPFFGICLGMQMAVVEFARHVCGLEKANSSEFDENTPHPVIDLLPEQKAVQEMGASMRLGSYPCRLSDASLACEAYGEVEIGERHRHRYEFNRDYQERLEACGLRITGRSPDGRLVEIVEIKDHPWFLGCQFHPEFKSRPTEPHPLFQRFIEAALRYRKKRAEDQ</sequence>
<proteinExistence type="inferred from homology"/>
<dbReference type="EC" id="6.3.4.2" evidence="1"/>
<dbReference type="EMBL" id="CP000252">
    <property type="protein sequence ID" value="ABC76708.1"/>
    <property type="molecule type" value="Genomic_DNA"/>
</dbReference>
<dbReference type="RefSeq" id="WP_011416741.1">
    <property type="nucleotide sequence ID" value="NC_007759.1"/>
</dbReference>
<dbReference type="SMR" id="Q2LRK2"/>
<dbReference type="FunCoup" id="Q2LRK2">
    <property type="interactions" value="412"/>
</dbReference>
<dbReference type="STRING" id="56780.SYN_02922"/>
<dbReference type="MEROPS" id="C26.964"/>
<dbReference type="KEGG" id="sat:SYN_02922"/>
<dbReference type="eggNOG" id="COG0504">
    <property type="taxonomic scope" value="Bacteria"/>
</dbReference>
<dbReference type="HOGENOM" id="CLU_011675_5_0_7"/>
<dbReference type="InParanoid" id="Q2LRK2"/>
<dbReference type="OrthoDB" id="9801107at2"/>
<dbReference type="UniPathway" id="UPA00159">
    <property type="reaction ID" value="UER00277"/>
</dbReference>
<dbReference type="Proteomes" id="UP000001933">
    <property type="component" value="Chromosome"/>
</dbReference>
<dbReference type="GO" id="GO:0005829">
    <property type="term" value="C:cytosol"/>
    <property type="evidence" value="ECO:0007669"/>
    <property type="project" value="TreeGrafter"/>
</dbReference>
<dbReference type="GO" id="GO:0005524">
    <property type="term" value="F:ATP binding"/>
    <property type="evidence" value="ECO:0007669"/>
    <property type="project" value="UniProtKB-KW"/>
</dbReference>
<dbReference type="GO" id="GO:0003883">
    <property type="term" value="F:CTP synthase activity"/>
    <property type="evidence" value="ECO:0007669"/>
    <property type="project" value="UniProtKB-UniRule"/>
</dbReference>
<dbReference type="GO" id="GO:0004359">
    <property type="term" value="F:glutaminase activity"/>
    <property type="evidence" value="ECO:0007669"/>
    <property type="project" value="RHEA"/>
</dbReference>
<dbReference type="GO" id="GO:0042802">
    <property type="term" value="F:identical protein binding"/>
    <property type="evidence" value="ECO:0007669"/>
    <property type="project" value="TreeGrafter"/>
</dbReference>
<dbReference type="GO" id="GO:0046872">
    <property type="term" value="F:metal ion binding"/>
    <property type="evidence" value="ECO:0007669"/>
    <property type="project" value="UniProtKB-KW"/>
</dbReference>
<dbReference type="GO" id="GO:0044210">
    <property type="term" value="P:'de novo' CTP biosynthetic process"/>
    <property type="evidence" value="ECO:0007669"/>
    <property type="project" value="UniProtKB-UniRule"/>
</dbReference>
<dbReference type="GO" id="GO:0019856">
    <property type="term" value="P:pyrimidine nucleobase biosynthetic process"/>
    <property type="evidence" value="ECO:0007669"/>
    <property type="project" value="TreeGrafter"/>
</dbReference>
<dbReference type="CDD" id="cd03113">
    <property type="entry name" value="CTPS_N"/>
    <property type="match status" value="1"/>
</dbReference>
<dbReference type="CDD" id="cd01746">
    <property type="entry name" value="GATase1_CTP_Synthase"/>
    <property type="match status" value="1"/>
</dbReference>
<dbReference type="FunFam" id="3.40.50.300:FF:000009">
    <property type="entry name" value="CTP synthase"/>
    <property type="match status" value="1"/>
</dbReference>
<dbReference type="FunFam" id="3.40.50.880:FF:000002">
    <property type="entry name" value="CTP synthase"/>
    <property type="match status" value="1"/>
</dbReference>
<dbReference type="Gene3D" id="3.40.50.880">
    <property type="match status" value="1"/>
</dbReference>
<dbReference type="Gene3D" id="3.40.50.300">
    <property type="entry name" value="P-loop containing nucleotide triphosphate hydrolases"/>
    <property type="match status" value="1"/>
</dbReference>
<dbReference type="HAMAP" id="MF_01227">
    <property type="entry name" value="PyrG"/>
    <property type="match status" value="1"/>
</dbReference>
<dbReference type="InterPro" id="IPR029062">
    <property type="entry name" value="Class_I_gatase-like"/>
</dbReference>
<dbReference type="InterPro" id="IPR004468">
    <property type="entry name" value="CTP_synthase"/>
</dbReference>
<dbReference type="InterPro" id="IPR017456">
    <property type="entry name" value="CTP_synthase_N"/>
</dbReference>
<dbReference type="InterPro" id="IPR017926">
    <property type="entry name" value="GATASE"/>
</dbReference>
<dbReference type="InterPro" id="IPR033828">
    <property type="entry name" value="GATase1_CTP_Synthase"/>
</dbReference>
<dbReference type="InterPro" id="IPR027417">
    <property type="entry name" value="P-loop_NTPase"/>
</dbReference>
<dbReference type="NCBIfam" id="NF003792">
    <property type="entry name" value="PRK05380.1"/>
    <property type="match status" value="1"/>
</dbReference>
<dbReference type="NCBIfam" id="TIGR00337">
    <property type="entry name" value="PyrG"/>
    <property type="match status" value="1"/>
</dbReference>
<dbReference type="PANTHER" id="PTHR11550">
    <property type="entry name" value="CTP SYNTHASE"/>
    <property type="match status" value="1"/>
</dbReference>
<dbReference type="PANTHER" id="PTHR11550:SF0">
    <property type="entry name" value="CTP SYNTHASE-RELATED"/>
    <property type="match status" value="1"/>
</dbReference>
<dbReference type="Pfam" id="PF06418">
    <property type="entry name" value="CTP_synth_N"/>
    <property type="match status" value="1"/>
</dbReference>
<dbReference type="Pfam" id="PF00117">
    <property type="entry name" value="GATase"/>
    <property type="match status" value="1"/>
</dbReference>
<dbReference type="SUPFAM" id="SSF52317">
    <property type="entry name" value="Class I glutamine amidotransferase-like"/>
    <property type="match status" value="1"/>
</dbReference>
<dbReference type="SUPFAM" id="SSF52540">
    <property type="entry name" value="P-loop containing nucleoside triphosphate hydrolases"/>
    <property type="match status" value="1"/>
</dbReference>
<dbReference type="PROSITE" id="PS51273">
    <property type="entry name" value="GATASE_TYPE_1"/>
    <property type="match status" value="1"/>
</dbReference>
<evidence type="ECO:0000255" key="1">
    <source>
        <dbReference type="HAMAP-Rule" id="MF_01227"/>
    </source>
</evidence>
<keyword id="KW-0067">ATP-binding</keyword>
<keyword id="KW-0315">Glutamine amidotransferase</keyword>
<keyword id="KW-0436">Ligase</keyword>
<keyword id="KW-0460">Magnesium</keyword>
<keyword id="KW-0479">Metal-binding</keyword>
<keyword id="KW-0547">Nucleotide-binding</keyword>
<keyword id="KW-0665">Pyrimidine biosynthesis</keyword>
<keyword id="KW-1185">Reference proteome</keyword>
<comment type="function">
    <text evidence="1">Catalyzes the ATP-dependent amination of UTP to CTP with either L-glutamine or ammonia as the source of nitrogen. Regulates intracellular CTP levels through interactions with the four ribonucleotide triphosphates.</text>
</comment>
<comment type="catalytic activity">
    <reaction evidence="1">
        <text>UTP + L-glutamine + ATP + H2O = CTP + L-glutamate + ADP + phosphate + 2 H(+)</text>
        <dbReference type="Rhea" id="RHEA:26426"/>
        <dbReference type="ChEBI" id="CHEBI:15377"/>
        <dbReference type="ChEBI" id="CHEBI:15378"/>
        <dbReference type="ChEBI" id="CHEBI:29985"/>
        <dbReference type="ChEBI" id="CHEBI:30616"/>
        <dbReference type="ChEBI" id="CHEBI:37563"/>
        <dbReference type="ChEBI" id="CHEBI:43474"/>
        <dbReference type="ChEBI" id="CHEBI:46398"/>
        <dbReference type="ChEBI" id="CHEBI:58359"/>
        <dbReference type="ChEBI" id="CHEBI:456216"/>
        <dbReference type="EC" id="6.3.4.2"/>
    </reaction>
</comment>
<comment type="catalytic activity">
    <reaction evidence="1">
        <text>L-glutamine + H2O = L-glutamate + NH4(+)</text>
        <dbReference type="Rhea" id="RHEA:15889"/>
        <dbReference type="ChEBI" id="CHEBI:15377"/>
        <dbReference type="ChEBI" id="CHEBI:28938"/>
        <dbReference type="ChEBI" id="CHEBI:29985"/>
        <dbReference type="ChEBI" id="CHEBI:58359"/>
    </reaction>
</comment>
<comment type="catalytic activity">
    <reaction evidence="1">
        <text>UTP + NH4(+) + ATP = CTP + ADP + phosphate + 2 H(+)</text>
        <dbReference type="Rhea" id="RHEA:16597"/>
        <dbReference type="ChEBI" id="CHEBI:15378"/>
        <dbReference type="ChEBI" id="CHEBI:28938"/>
        <dbReference type="ChEBI" id="CHEBI:30616"/>
        <dbReference type="ChEBI" id="CHEBI:37563"/>
        <dbReference type="ChEBI" id="CHEBI:43474"/>
        <dbReference type="ChEBI" id="CHEBI:46398"/>
        <dbReference type="ChEBI" id="CHEBI:456216"/>
    </reaction>
</comment>
<comment type="activity regulation">
    <text evidence="1">Allosterically activated by GTP, when glutamine is the substrate; GTP has no effect on the reaction when ammonia is the substrate. The allosteric effector GTP functions by stabilizing the protein conformation that binds the tetrahedral intermediate(s) formed during glutamine hydrolysis. Inhibited by the product CTP, via allosteric rather than competitive inhibition.</text>
</comment>
<comment type="pathway">
    <text evidence="1">Pyrimidine metabolism; CTP biosynthesis via de novo pathway; CTP from UDP: step 2/2.</text>
</comment>
<comment type="subunit">
    <text evidence="1">Homotetramer.</text>
</comment>
<comment type="miscellaneous">
    <text evidence="1">CTPSs have evolved a hybrid strategy for distinguishing between UTP and CTP. The overlapping regions of the product feedback inhibitory and substrate sites recognize a common feature in both compounds, the triphosphate moiety. To differentiate isosteric substrate and product pyrimidine rings, an additional pocket far from the expected kinase/ligase catalytic site, specifically recognizes the cytosine and ribose portions of the product inhibitor.</text>
</comment>
<comment type="similarity">
    <text evidence="1">Belongs to the CTP synthase family.</text>
</comment>
<protein>
    <recommendedName>
        <fullName evidence="1">CTP synthase</fullName>
        <ecNumber evidence="1">6.3.4.2</ecNumber>
    </recommendedName>
    <alternativeName>
        <fullName evidence="1">Cytidine 5'-triphosphate synthase</fullName>
    </alternativeName>
    <alternativeName>
        <fullName evidence="1">Cytidine triphosphate synthetase</fullName>
        <shortName evidence="1">CTP synthetase</shortName>
        <shortName evidence="1">CTPS</shortName>
    </alternativeName>
    <alternativeName>
        <fullName evidence="1">UTP--ammonia ligase</fullName>
    </alternativeName>
</protein>
<reference key="1">
    <citation type="journal article" date="2007" name="Proc. Natl. Acad. Sci. U.S.A.">
        <title>The genome of Syntrophus aciditrophicus: life at the thermodynamic limit of microbial growth.</title>
        <authorList>
            <person name="McInerney M.J."/>
            <person name="Rohlin L."/>
            <person name="Mouttaki H."/>
            <person name="Kim U."/>
            <person name="Krupp R.S."/>
            <person name="Rios-Hernandez L."/>
            <person name="Sieber J."/>
            <person name="Struchtemeyer C.G."/>
            <person name="Bhattacharyya A."/>
            <person name="Campbell J.W."/>
            <person name="Gunsalus R.P."/>
        </authorList>
    </citation>
    <scope>NUCLEOTIDE SEQUENCE [LARGE SCALE GENOMIC DNA]</scope>
    <source>
        <strain>SB</strain>
    </source>
</reference>
<gene>
    <name evidence="1" type="primary">pyrG</name>
    <name type="ordered locus">SYNAS_08290</name>
    <name type="ORF">SYN_02922</name>
</gene>
<feature type="chain" id="PRO_0000266248" description="CTP synthase">
    <location>
        <begin position="1"/>
        <end position="538"/>
    </location>
</feature>
<feature type="domain" description="Glutamine amidotransferase type-1" evidence="1">
    <location>
        <begin position="291"/>
        <end position="533"/>
    </location>
</feature>
<feature type="region of interest" description="Amidoligase domain" evidence="1">
    <location>
        <begin position="1"/>
        <end position="266"/>
    </location>
</feature>
<feature type="active site" description="Nucleophile; for glutamine hydrolysis" evidence="1">
    <location>
        <position position="380"/>
    </location>
</feature>
<feature type="active site" evidence="1">
    <location>
        <position position="506"/>
    </location>
</feature>
<feature type="active site" evidence="1">
    <location>
        <position position="508"/>
    </location>
</feature>
<feature type="binding site" evidence="1">
    <location>
        <position position="14"/>
    </location>
    <ligand>
        <name>CTP</name>
        <dbReference type="ChEBI" id="CHEBI:37563"/>
        <note>allosteric inhibitor</note>
    </ligand>
</feature>
<feature type="binding site" evidence="1">
    <location>
        <position position="14"/>
    </location>
    <ligand>
        <name>UTP</name>
        <dbReference type="ChEBI" id="CHEBI:46398"/>
    </ligand>
</feature>
<feature type="binding site" evidence="1">
    <location>
        <begin position="15"/>
        <end position="20"/>
    </location>
    <ligand>
        <name>ATP</name>
        <dbReference type="ChEBI" id="CHEBI:30616"/>
    </ligand>
</feature>
<feature type="binding site" evidence="1">
    <location>
        <position position="72"/>
    </location>
    <ligand>
        <name>ATP</name>
        <dbReference type="ChEBI" id="CHEBI:30616"/>
    </ligand>
</feature>
<feature type="binding site" evidence="1">
    <location>
        <position position="72"/>
    </location>
    <ligand>
        <name>Mg(2+)</name>
        <dbReference type="ChEBI" id="CHEBI:18420"/>
    </ligand>
</feature>
<feature type="binding site" evidence="1">
    <location>
        <position position="140"/>
    </location>
    <ligand>
        <name>Mg(2+)</name>
        <dbReference type="ChEBI" id="CHEBI:18420"/>
    </ligand>
</feature>
<feature type="binding site" evidence="1">
    <location>
        <begin position="147"/>
        <end position="149"/>
    </location>
    <ligand>
        <name>CTP</name>
        <dbReference type="ChEBI" id="CHEBI:37563"/>
        <note>allosteric inhibitor</note>
    </ligand>
</feature>
<feature type="binding site" evidence="1">
    <location>
        <begin position="187"/>
        <end position="192"/>
    </location>
    <ligand>
        <name>CTP</name>
        <dbReference type="ChEBI" id="CHEBI:37563"/>
        <note>allosteric inhibitor</note>
    </ligand>
</feature>
<feature type="binding site" evidence="1">
    <location>
        <begin position="187"/>
        <end position="192"/>
    </location>
    <ligand>
        <name>UTP</name>
        <dbReference type="ChEBI" id="CHEBI:46398"/>
    </ligand>
</feature>
<feature type="binding site" evidence="1">
    <location>
        <position position="223"/>
    </location>
    <ligand>
        <name>CTP</name>
        <dbReference type="ChEBI" id="CHEBI:37563"/>
        <note>allosteric inhibitor</note>
    </ligand>
</feature>
<feature type="binding site" evidence="1">
    <location>
        <position position="223"/>
    </location>
    <ligand>
        <name>UTP</name>
        <dbReference type="ChEBI" id="CHEBI:46398"/>
    </ligand>
</feature>
<feature type="binding site" evidence="1">
    <location>
        <begin position="239"/>
        <end position="241"/>
    </location>
    <ligand>
        <name>ATP</name>
        <dbReference type="ChEBI" id="CHEBI:30616"/>
    </ligand>
</feature>
<feature type="binding site" evidence="1">
    <location>
        <position position="353"/>
    </location>
    <ligand>
        <name>L-glutamine</name>
        <dbReference type="ChEBI" id="CHEBI:58359"/>
    </ligand>
</feature>
<feature type="binding site" evidence="1">
    <location>
        <begin position="381"/>
        <end position="384"/>
    </location>
    <ligand>
        <name>L-glutamine</name>
        <dbReference type="ChEBI" id="CHEBI:58359"/>
    </ligand>
</feature>
<feature type="binding site" evidence="1">
    <location>
        <position position="404"/>
    </location>
    <ligand>
        <name>L-glutamine</name>
        <dbReference type="ChEBI" id="CHEBI:58359"/>
    </ligand>
</feature>
<feature type="binding site" evidence="1">
    <location>
        <position position="461"/>
    </location>
    <ligand>
        <name>L-glutamine</name>
        <dbReference type="ChEBI" id="CHEBI:58359"/>
    </ligand>
</feature>
<organism>
    <name type="scientific">Syntrophus aciditrophicus (strain SB)</name>
    <dbReference type="NCBI Taxonomy" id="56780"/>
    <lineage>
        <taxon>Bacteria</taxon>
        <taxon>Pseudomonadati</taxon>
        <taxon>Thermodesulfobacteriota</taxon>
        <taxon>Syntrophia</taxon>
        <taxon>Syntrophales</taxon>
        <taxon>Syntrophaceae</taxon>
        <taxon>Syntrophus</taxon>
    </lineage>
</organism>
<accession>Q2LRK2</accession>